<proteinExistence type="inferred from homology"/>
<protein>
    <recommendedName>
        <fullName evidence="1">Peptide methionine sulfoxide reductase MsrB</fullName>
        <ecNumber evidence="1">1.8.4.12</ecNumber>
    </recommendedName>
    <alternativeName>
        <fullName evidence="1">Peptide-methionine (R)-S-oxide reductase</fullName>
    </alternativeName>
</protein>
<sequence>MSHDSDDKTYPYQKDDAELRRRLTPMQYEVTQHAATERAFTGEYTDTEDAGIYKCVVCSTPLFESGAKFHSGCGWPSYFKPLNGEVIDEKIDHMHGMVRVEVRCNHCGAHLGHVFEDGPRDKTGLRYCINSAALNFESRPEKE</sequence>
<evidence type="ECO:0000255" key="1">
    <source>
        <dbReference type="HAMAP-Rule" id="MF_01400"/>
    </source>
</evidence>
<evidence type="ECO:0000255" key="2">
    <source>
        <dbReference type="PROSITE-ProRule" id="PRU01126"/>
    </source>
</evidence>
<reference key="1">
    <citation type="submission" date="2008-04" db="EMBL/GenBank/DDBJ databases">
        <title>Complete sequence of chromosome 1 of Burkholderia ambifaria MC40-6.</title>
        <authorList>
            <person name="Copeland A."/>
            <person name="Lucas S."/>
            <person name="Lapidus A."/>
            <person name="Glavina del Rio T."/>
            <person name="Dalin E."/>
            <person name="Tice H."/>
            <person name="Pitluck S."/>
            <person name="Chain P."/>
            <person name="Malfatti S."/>
            <person name="Shin M."/>
            <person name="Vergez L."/>
            <person name="Lang D."/>
            <person name="Schmutz J."/>
            <person name="Larimer F."/>
            <person name="Land M."/>
            <person name="Hauser L."/>
            <person name="Kyrpides N."/>
            <person name="Lykidis A."/>
            <person name="Ramette A."/>
            <person name="Konstantinidis K."/>
            <person name="Tiedje J."/>
            <person name="Richardson P."/>
        </authorList>
    </citation>
    <scope>NUCLEOTIDE SEQUENCE [LARGE SCALE GENOMIC DNA]</scope>
    <source>
        <strain>MC40-6</strain>
    </source>
</reference>
<organism>
    <name type="scientific">Burkholderia ambifaria (strain MC40-6)</name>
    <dbReference type="NCBI Taxonomy" id="398577"/>
    <lineage>
        <taxon>Bacteria</taxon>
        <taxon>Pseudomonadati</taxon>
        <taxon>Pseudomonadota</taxon>
        <taxon>Betaproteobacteria</taxon>
        <taxon>Burkholderiales</taxon>
        <taxon>Burkholderiaceae</taxon>
        <taxon>Burkholderia</taxon>
        <taxon>Burkholderia cepacia complex</taxon>
    </lineage>
</organism>
<dbReference type="EC" id="1.8.4.12" evidence="1"/>
<dbReference type="EMBL" id="CP001025">
    <property type="protein sequence ID" value="ACB64310.1"/>
    <property type="molecule type" value="Genomic_DNA"/>
</dbReference>
<dbReference type="RefSeq" id="WP_012364067.1">
    <property type="nucleotide sequence ID" value="NC_010551.1"/>
</dbReference>
<dbReference type="SMR" id="B1YRN6"/>
<dbReference type="KEGG" id="bac:BamMC406_1827"/>
<dbReference type="HOGENOM" id="CLU_031040_8_5_4"/>
<dbReference type="OrthoDB" id="9785497at2"/>
<dbReference type="Proteomes" id="UP000001680">
    <property type="component" value="Chromosome 1"/>
</dbReference>
<dbReference type="GO" id="GO:0005737">
    <property type="term" value="C:cytoplasm"/>
    <property type="evidence" value="ECO:0007669"/>
    <property type="project" value="TreeGrafter"/>
</dbReference>
<dbReference type="GO" id="GO:0033743">
    <property type="term" value="F:peptide-methionine (R)-S-oxide reductase activity"/>
    <property type="evidence" value="ECO:0007669"/>
    <property type="project" value="UniProtKB-UniRule"/>
</dbReference>
<dbReference type="GO" id="GO:0008270">
    <property type="term" value="F:zinc ion binding"/>
    <property type="evidence" value="ECO:0007669"/>
    <property type="project" value="UniProtKB-UniRule"/>
</dbReference>
<dbReference type="GO" id="GO:0030091">
    <property type="term" value="P:protein repair"/>
    <property type="evidence" value="ECO:0007669"/>
    <property type="project" value="InterPro"/>
</dbReference>
<dbReference type="GO" id="GO:0006979">
    <property type="term" value="P:response to oxidative stress"/>
    <property type="evidence" value="ECO:0007669"/>
    <property type="project" value="InterPro"/>
</dbReference>
<dbReference type="FunFam" id="2.170.150.20:FF:000003">
    <property type="entry name" value="Peptide methionine sulfoxide reductase MsrB"/>
    <property type="match status" value="1"/>
</dbReference>
<dbReference type="Gene3D" id="2.170.150.20">
    <property type="entry name" value="Peptide methionine sulfoxide reductase"/>
    <property type="match status" value="1"/>
</dbReference>
<dbReference type="HAMAP" id="MF_01400">
    <property type="entry name" value="MsrB"/>
    <property type="match status" value="1"/>
</dbReference>
<dbReference type="InterPro" id="IPR028427">
    <property type="entry name" value="Met_Sox_Rdtase_MsrB"/>
</dbReference>
<dbReference type="InterPro" id="IPR002579">
    <property type="entry name" value="Met_Sox_Rdtase_MsrB_dom"/>
</dbReference>
<dbReference type="InterPro" id="IPR011057">
    <property type="entry name" value="Mss4-like_sf"/>
</dbReference>
<dbReference type="NCBIfam" id="TIGR00357">
    <property type="entry name" value="peptide-methionine (R)-S-oxide reductase MsrB"/>
    <property type="match status" value="1"/>
</dbReference>
<dbReference type="PANTHER" id="PTHR10173">
    <property type="entry name" value="METHIONINE SULFOXIDE REDUCTASE"/>
    <property type="match status" value="1"/>
</dbReference>
<dbReference type="PANTHER" id="PTHR10173:SF52">
    <property type="entry name" value="METHIONINE-R-SULFOXIDE REDUCTASE B1"/>
    <property type="match status" value="1"/>
</dbReference>
<dbReference type="Pfam" id="PF01641">
    <property type="entry name" value="SelR"/>
    <property type="match status" value="1"/>
</dbReference>
<dbReference type="SUPFAM" id="SSF51316">
    <property type="entry name" value="Mss4-like"/>
    <property type="match status" value="1"/>
</dbReference>
<dbReference type="PROSITE" id="PS51790">
    <property type="entry name" value="MSRB"/>
    <property type="match status" value="1"/>
</dbReference>
<feature type="chain" id="PRO_1000145350" description="Peptide methionine sulfoxide reductase MsrB">
    <location>
        <begin position="1"/>
        <end position="143"/>
    </location>
</feature>
<feature type="domain" description="MsrB" evidence="2">
    <location>
        <begin position="16"/>
        <end position="139"/>
    </location>
</feature>
<feature type="active site" description="Nucleophile" evidence="2">
    <location>
        <position position="128"/>
    </location>
</feature>
<feature type="binding site" evidence="2">
    <location>
        <position position="55"/>
    </location>
    <ligand>
        <name>Zn(2+)</name>
        <dbReference type="ChEBI" id="CHEBI:29105"/>
    </ligand>
</feature>
<feature type="binding site" evidence="2">
    <location>
        <position position="58"/>
    </location>
    <ligand>
        <name>Zn(2+)</name>
        <dbReference type="ChEBI" id="CHEBI:29105"/>
    </ligand>
</feature>
<feature type="binding site" evidence="2">
    <location>
        <position position="104"/>
    </location>
    <ligand>
        <name>Zn(2+)</name>
        <dbReference type="ChEBI" id="CHEBI:29105"/>
    </ligand>
</feature>
<feature type="binding site" evidence="2">
    <location>
        <position position="107"/>
    </location>
    <ligand>
        <name>Zn(2+)</name>
        <dbReference type="ChEBI" id="CHEBI:29105"/>
    </ligand>
</feature>
<accession>B1YRN6</accession>
<gene>
    <name evidence="1" type="primary">msrB</name>
    <name type="ordered locus">BamMC406_1827</name>
</gene>
<comment type="catalytic activity">
    <reaction evidence="1">
        <text>L-methionyl-[protein] + [thioredoxin]-disulfide + H2O = L-methionyl-(R)-S-oxide-[protein] + [thioredoxin]-dithiol</text>
        <dbReference type="Rhea" id="RHEA:24164"/>
        <dbReference type="Rhea" id="RHEA-COMP:10698"/>
        <dbReference type="Rhea" id="RHEA-COMP:10700"/>
        <dbReference type="Rhea" id="RHEA-COMP:12313"/>
        <dbReference type="Rhea" id="RHEA-COMP:12314"/>
        <dbReference type="ChEBI" id="CHEBI:15377"/>
        <dbReference type="ChEBI" id="CHEBI:16044"/>
        <dbReference type="ChEBI" id="CHEBI:29950"/>
        <dbReference type="ChEBI" id="CHEBI:45764"/>
        <dbReference type="ChEBI" id="CHEBI:50058"/>
        <dbReference type="EC" id="1.8.4.12"/>
    </reaction>
</comment>
<comment type="cofactor">
    <cofactor evidence="1">
        <name>Zn(2+)</name>
        <dbReference type="ChEBI" id="CHEBI:29105"/>
    </cofactor>
    <text evidence="1">Binds 1 zinc ion per subunit. The zinc ion is important for the structural integrity of the protein.</text>
</comment>
<comment type="similarity">
    <text evidence="1">Belongs to the MsrB Met sulfoxide reductase family.</text>
</comment>
<keyword id="KW-0479">Metal-binding</keyword>
<keyword id="KW-0560">Oxidoreductase</keyword>
<keyword id="KW-0862">Zinc</keyword>
<name>MSRB_BURA4</name>